<name>RL18_STAMF</name>
<sequence length="202" mass="22735">MARGPRYKVPKRRRREGKTNYYKRYKMVLSGHPRFVVRKTLKHIIVQIVTAKPEGDITIAAAHSRELYKKYGWMGGLGNTPAAYLTGLLAALRGLKAGIKYAVPDIGLHVPTRGAKVFAAIKAANDVGLKVPVGEEVVPSDDRIRGEHIASWAKMLQEASPEAYERFFSKYISRGFDPTQLPTHFEEVKNRILEEYKDVLGE</sequence>
<dbReference type="EMBL" id="CP000575">
    <property type="protein sequence ID" value="ABN70136.1"/>
    <property type="molecule type" value="Genomic_DNA"/>
</dbReference>
<dbReference type="RefSeq" id="WP_011839327.1">
    <property type="nucleotide sequence ID" value="NC_009033.1"/>
</dbReference>
<dbReference type="SMR" id="A3DNC6"/>
<dbReference type="STRING" id="399550.Smar_1038"/>
<dbReference type="GeneID" id="4906959"/>
<dbReference type="KEGG" id="smr:Smar_1038"/>
<dbReference type="eggNOG" id="arCOG04088">
    <property type="taxonomic scope" value="Archaea"/>
</dbReference>
<dbReference type="HOGENOM" id="CLU_056222_2_0_2"/>
<dbReference type="OrthoDB" id="8644at2157"/>
<dbReference type="Proteomes" id="UP000000254">
    <property type="component" value="Chromosome"/>
</dbReference>
<dbReference type="GO" id="GO:0022625">
    <property type="term" value="C:cytosolic large ribosomal subunit"/>
    <property type="evidence" value="ECO:0007669"/>
    <property type="project" value="TreeGrafter"/>
</dbReference>
<dbReference type="GO" id="GO:0008097">
    <property type="term" value="F:5S rRNA binding"/>
    <property type="evidence" value="ECO:0007669"/>
    <property type="project" value="InterPro"/>
</dbReference>
<dbReference type="GO" id="GO:0003735">
    <property type="term" value="F:structural constituent of ribosome"/>
    <property type="evidence" value="ECO:0007669"/>
    <property type="project" value="InterPro"/>
</dbReference>
<dbReference type="GO" id="GO:0000027">
    <property type="term" value="P:ribosomal large subunit assembly"/>
    <property type="evidence" value="ECO:0007669"/>
    <property type="project" value="TreeGrafter"/>
</dbReference>
<dbReference type="GO" id="GO:0006412">
    <property type="term" value="P:translation"/>
    <property type="evidence" value="ECO:0007669"/>
    <property type="project" value="UniProtKB-UniRule"/>
</dbReference>
<dbReference type="CDD" id="cd00432">
    <property type="entry name" value="Ribosomal_L18_L5e"/>
    <property type="match status" value="1"/>
</dbReference>
<dbReference type="Gene3D" id="3.30.420.100">
    <property type="match status" value="1"/>
</dbReference>
<dbReference type="HAMAP" id="MF_01337_A">
    <property type="entry name" value="Ribosomal_uL18_A"/>
    <property type="match status" value="1"/>
</dbReference>
<dbReference type="InterPro" id="IPR005485">
    <property type="entry name" value="Rbsml_uL18_euk"/>
</dbReference>
<dbReference type="NCBIfam" id="NF006342">
    <property type="entry name" value="PRK08569.1"/>
    <property type="match status" value="1"/>
</dbReference>
<dbReference type="PANTHER" id="PTHR23410:SF12">
    <property type="entry name" value="LARGE RIBOSOMAL SUBUNIT PROTEIN UL18"/>
    <property type="match status" value="1"/>
</dbReference>
<dbReference type="PANTHER" id="PTHR23410">
    <property type="entry name" value="RIBOSOMAL PROTEIN L5-RELATED"/>
    <property type="match status" value="1"/>
</dbReference>
<dbReference type="Pfam" id="PF17144">
    <property type="entry name" value="Ribosomal_L5e"/>
    <property type="match status" value="1"/>
</dbReference>
<dbReference type="SUPFAM" id="SSF53137">
    <property type="entry name" value="Translational machinery components"/>
    <property type="match status" value="1"/>
</dbReference>
<proteinExistence type="inferred from homology"/>
<gene>
    <name evidence="1" type="primary">rpl18</name>
    <name type="ordered locus">Smar_1038</name>
</gene>
<protein>
    <recommendedName>
        <fullName evidence="1">Large ribosomal subunit protein uL18</fullName>
    </recommendedName>
    <alternativeName>
        <fullName evidence="2">50S ribosomal protein L18</fullName>
    </alternativeName>
</protein>
<organism>
    <name type="scientific">Staphylothermus marinus (strain ATCC 43588 / DSM 3639 / JCM 9404 / F1)</name>
    <dbReference type="NCBI Taxonomy" id="399550"/>
    <lineage>
        <taxon>Archaea</taxon>
        <taxon>Thermoproteota</taxon>
        <taxon>Thermoprotei</taxon>
        <taxon>Desulfurococcales</taxon>
        <taxon>Desulfurococcaceae</taxon>
        <taxon>Staphylothermus</taxon>
    </lineage>
</organism>
<keyword id="KW-1185">Reference proteome</keyword>
<keyword id="KW-0687">Ribonucleoprotein</keyword>
<keyword id="KW-0689">Ribosomal protein</keyword>
<keyword id="KW-0694">RNA-binding</keyword>
<keyword id="KW-0699">rRNA-binding</keyword>
<reference key="1">
    <citation type="journal article" date="2009" name="BMC Genomics">
        <title>The complete genome sequence of Staphylothermus marinus reveals differences in sulfur metabolism among heterotrophic Crenarchaeota.</title>
        <authorList>
            <person name="Anderson I.J."/>
            <person name="Dharmarajan L."/>
            <person name="Rodriguez J."/>
            <person name="Hooper S."/>
            <person name="Porat I."/>
            <person name="Ulrich L.E."/>
            <person name="Elkins J.G."/>
            <person name="Mavromatis K."/>
            <person name="Sun H."/>
            <person name="Land M."/>
            <person name="Lapidus A."/>
            <person name="Lucas S."/>
            <person name="Barry K."/>
            <person name="Huber H."/>
            <person name="Zhulin I.B."/>
            <person name="Whitman W.B."/>
            <person name="Mukhopadhyay B."/>
            <person name="Woese C."/>
            <person name="Bristow J."/>
            <person name="Kyrpides N."/>
        </authorList>
    </citation>
    <scope>NUCLEOTIDE SEQUENCE [LARGE SCALE GENOMIC DNA]</scope>
    <source>
        <strain>ATCC 43588 / DSM 3639 / JCM 9404 / F1</strain>
    </source>
</reference>
<reference key="2">
    <citation type="journal article" date="2009" name="Stand. Genomic Sci.">
        <title>Complete genome sequence of Staphylothermus marinus Stetter and Fiala 1986 type strain F1.</title>
        <authorList>
            <person name="Anderson I.J."/>
            <person name="Sun H."/>
            <person name="Lapidus A."/>
            <person name="Copeland A."/>
            <person name="Glavina Del Rio T."/>
            <person name="Tice H."/>
            <person name="Dalin E."/>
            <person name="Lucas S."/>
            <person name="Barry K."/>
            <person name="Land M."/>
            <person name="Richardson P."/>
            <person name="Huber H."/>
            <person name="Kyrpides N.C."/>
        </authorList>
    </citation>
    <scope>NUCLEOTIDE SEQUENCE [LARGE SCALE GENOMIC DNA]</scope>
    <source>
        <strain>ATCC 43588 / DSM 3639 / JCM 9404 / F1</strain>
    </source>
</reference>
<evidence type="ECO:0000255" key="1">
    <source>
        <dbReference type="HAMAP-Rule" id="MF_01337"/>
    </source>
</evidence>
<evidence type="ECO:0000305" key="2"/>
<accession>A3DNC6</accession>
<comment type="function">
    <text evidence="1">This is one of the proteins that bind and probably mediate the attachment of the 5S RNA into the large ribosomal subunit, where it forms part of the central protuberance.</text>
</comment>
<comment type="subunit">
    <text evidence="1">Part of the 50S ribosomal subunit. Contacts the 5S and 23S rRNAs.</text>
</comment>
<comment type="similarity">
    <text evidence="1">Belongs to the universal ribosomal protein uL18 family.</text>
</comment>
<feature type="chain" id="PRO_1000053119" description="Large ribosomal subunit protein uL18">
    <location>
        <begin position="1"/>
        <end position="202"/>
    </location>
</feature>